<comment type="function">
    <text evidence="1">Component of the cytochrome b6-f complex, which mediates electron transfer between photosystem II (PSII) and photosystem I (PSI), cyclic electron flow around PSI, and state transitions.</text>
</comment>
<comment type="subunit">
    <text evidence="1">The 4 large subunits of the cytochrome b6-f complex are cytochrome b6, subunit IV (17 kDa polypeptide, PetD), cytochrome f and the Rieske protein, while the 4 small subunits are PetG, PetL, PetM and PetN. The complex functions as a dimer.</text>
</comment>
<comment type="subcellular location">
    <subcellularLocation>
        <location evidence="1">Plastid</location>
        <location evidence="1">Chloroplast thylakoid membrane</location>
        <topology evidence="1">Single-pass membrane protein</topology>
    </subcellularLocation>
</comment>
<comment type="similarity">
    <text evidence="1">Belongs to the PetN family.</text>
</comment>
<geneLocation type="chloroplast"/>
<protein>
    <recommendedName>
        <fullName evidence="1">Cytochrome b6-f complex subunit 8</fullName>
    </recommendedName>
    <alternativeName>
        <fullName evidence="1">Cytochrome b6-f complex subunit PetN</fullName>
    </alternativeName>
    <alternativeName>
        <fullName evidence="1">Cytochrome b6-f complex subunit VIII</fullName>
    </alternativeName>
</protein>
<keyword id="KW-0150">Chloroplast</keyword>
<keyword id="KW-0249">Electron transport</keyword>
<keyword id="KW-0472">Membrane</keyword>
<keyword id="KW-0602">Photosynthesis</keyword>
<keyword id="KW-0934">Plastid</keyword>
<keyword id="KW-0793">Thylakoid</keyword>
<keyword id="KW-0812">Transmembrane</keyword>
<keyword id="KW-1133">Transmembrane helix</keyword>
<keyword id="KW-0813">Transport</keyword>
<evidence type="ECO:0000255" key="1">
    <source>
        <dbReference type="HAMAP-Rule" id="MF_00395"/>
    </source>
</evidence>
<feature type="chain" id="PRO_0000355428" description="Cytochrome b6-f complex subunit 8">
    <location>
        <begin position="1"/>
        <end position="29"/>
    </location>
</feature>
<feature type="transmembrane region" description="Helical" evidence="1">
    <location>
        <begin position="3"/>
        <end position="23"/>
    </location>
</feature>
<proteinExistence type="inferred from homology"/>
<organism>
    <name type="scientific">Chloranthus spicatus</name>
    <name type="common">Chulantree</name>
    <name type="synonym">Nigrina spicata</name>
    <dbReference type="NCBI Taxonomy" id="13006"/>
    <lineage>
        <taxon>Eukaryota</taxon>
        <taxon>Viridiplantae</taxon>
        <taxon>Streptophyta</taxon>
        <taxon>Embryophyta</taxon>
        <taxon>Tracheophyta</taxon>
        <taxon>Spermatophyta</taxon>
        <taxon>Magnoliopsida</taxon>
        <taxon>Chloranthales</taxon>
        <taxon>Chloranthaceae</taxon>
        <taxon>Chloranthus</taxon>
    </lineage>
</organism>
<sequence>MDTVSLAWAALMVVFTFSLSLVVWGRSGL</sequence>
<name>PETN_CHLSC</name>
<dbReference type="EMBL" id="EF380352">
    <property type="protein sequence ID" value="ABQ43253.1"/>
    <property type="molecule type" value="Genomic_DNA"/>
</dbReference>
<dbReference type="RefSeq" id="YP_001294091.1">
    <property type="nucleotide sequence ID" value="NC_009598.1"/>
</dbReference>
<dbReference type="SMR" id="A6MMB5"/>
<dbReference type="GeneID" id="5236439"/>
<dbReference type="GO" id="GO:0009535">
    <property type="term" value="C:chloroplast thylakoid membrane"/>
    <property type="evidence" value="ECO:0007669"/>
    <property type="project" value="UniProtKB-SubCell"/>
</dbReference>
<dbReference type="GO" id="GO:0009512">
    <property type="term" value="C:cytochrome b6f complex"/>
    <property type="evidence" value="ECO:0007669"/>
    <property type="project" value="InterPro"/>
</dbReference>
<dbReference type="GO" id="GO:0045158">
    <property type="term" value="F:electron transporter, transferring electrons within cytochrome b6/f complex of photosystem II activity"/>
    <property type="evidence" value="ECO:0007669"/>
    <property type="project" value="InterPro"/>
</dbReference>
<dbReference type="GO" id="GO:0017004">
    <property type="term" value="P:cytochrome complex assembly"/>
    <property type="evidence" value="ECO:0007669"/>
    <property type="project" value="UniProtKB-UniRule"/>
</dbReference>
<dbReference type="GO" id="GO:0015979">
    <property type="term" value="P:photosynthesis"/>
    <property type="evidence" value="ECO:0007669"/>
    <property type="project" value="UniProtKB-KW"/>
</dbReference>
<dbReference type="HAMAP" id="MF_00395">
    <property type="entry name" value="Cytb6_f_PetN"/>
    <property type="match status" value="1"/>
</dbReference>
<dbReference type="InterPro" id="IPR036143">
    <property type="entry name" value="Cytochr_b6-f_cplx_su8_sf"/>
</dbReference>
<dbReference type="InterPro" id="IPR005497">
    <property type="entry name" value="Cytochrome_b6-f_cplx_su8"/>
</dbReference>
<dbReference type="Pfam" id="PF03742">
    <property type="entry name" value="PetN"/>
    <property type="match status" value="1"/>
</dbReference>
<dbReference type="SUPFAM" id="SSF103451">
    <property type="entry name" value="PetN subunit of the cytochrome b6f complex"/>
    <property type="match status" value="1"/>
</dbReference>
<gene>
    <name evidence="1" type="primary">petN</name>
</gene>
<reference key="1">
    <citation type="journal article" date="2007" name="Mol. Phylogenet. Evol.">
        <title>Phylogenetic and evolutionary implications of complete chloroplast genome sequences of four early-diverging angiosperms: Buxus (Buxaceae), Chloranthus (Chloranthaceae), Dioscorea (Dioscoreaceae), and Illicium (Schisandraceae).</title>
        <authorList>
            <person name="Hansen D.R."/>
            <person name="Dastidar S.G."/>
            <person name="Cai Z."/>
            <person name="Penaflor C."/>
            <person name="Kuehl J.V."/>
            <person name="Boore J.L."/>
            <person name="Jansen R.K."/>
        </authorList>
    </citation>
    <scope>NUCLEOTIDE SEQUENCE [LARGE SCALE GENOMIC DNA]</scope>
</reference>
<accession>A6MMB5</accession>